<feature type="chain" id="PRO_0000418850" description="Inactive 7-epi-sesquithujene synthase">
    <location>
        <begin position="1"/>
        <end position="460"/>
    </location>
</feature>
<feature type="short sequence motif" description="DDXXD motif" evidence="1">
    <location>
        <begin position="308"/>
        <end position="312"/>
    </location>
</feature>
<feature type="binding site" evidence="2">
    <location>
        <position position="308"/>
    </location>
    <ligand>
        <name>Mg(2+)</name>
        <dbReference type="ChEBI" id="CHEBI:18420"/>
        <label>1</label>
    </ligand>
</feature>
<feature type="binding site" evidence="2">
    <location>
        <position position="308"/>
    </location>
    <ligand>
        <name>Mg(2+)</name>
        <dbReference type="ChEBI" id="CHEBI:18420"/>
        <label>2</label>
    </ligand>
</feature>
<feature type="binding site" evidence="1">
    <location>
        <position position="308"/>
    </location>
    <ligand>
        <name>substrate</name>
    </ligand>
</feature>
<feature type="binding site" evidence="2">
    <location>
        <position position="312"/>
    </location>
    <ligand>
        <name>Mg(2+)</name>
        <dbReference type="ChEBI" id="CHEBI:18420"/>
        <label>1</label>
    </ligand>
</feature>
<feature type="binding site" evidence="2">
    <location>
        <position position="312"/>
    </location>
    <ligand>
        <name>Mg(2+)</name>
        <dbReference type="ChEBI" id="CHEBI:18420"/>
        <label>2</label>
    </ligand>
</feature>
<feature type="binding site" evidence="1">
    <location>
        <position position="312"/>
    </location>
    <ligand>
        <name>substrate</name>
    </ligand>
</feature>
<accession>Q6JD71</accession>
<evidence type="ECO:0000250" key="1">
    <source>
        <dbReference type="UniProtKB" id="A0A1C9J6A7"/>
    </source>
</evidence>
<evidence type="ECO:0000250" key="2">
    <source>
        <dbReference type="UniProtKB" id="Q40577"/>
    </source>
</evidence>
<evidence type="ECO:0000250" key="3">
    <source>
        <dbReference type="UniProtKB" id="Q5GJ60"/>
    </source>
</evidence>
<evidence type="ECO:0000250" key="4">
    <source>
        <dbReference type="UniProtKB" id="Q6JD73"/>
    </source>
</evidence>
<evidence type="ECO:0000250" key="5">
    <source>
        <dbReference type="UniProtKB" id="Q6Q3H2"/>
    </source>
</evidence>
<evidence type="ECO:0000303" key="6">
    <source>
    </source>
</evidence>
<evidence type="ECO:0000305" key="7"/>
<evidence type="ECO:0000305" key="8">
    <source>
    </source>
</evidence>
<evidence type="ECO:0000305" key="9">
    <source>
    </source>
</evidence>
<dbReference type="EMBL" id="AY518312">
    <property type="protein sequence ID" value="AAS88573.1"/>
    <property type="molecule type" value="mRNA"/>
</dbReference>
<dbReference type="SMR" id="Q6JD71"/>
<dbReference type="MaizeGDB" id="1219892"/>
<dbReference type="InParanoid" id="Q6JD71"/>
<dbReference type="UniPathway" id="UPA00213"/>
<dbReference type="Proteomes" id="UP000007305">
    <property type="component" value="Unplaced"/>
</dbReference>
<dbReference type="ExpressionAtlas" id="Q6JD71">
    <property type="expression patterns" value="baseline"/>
</dbReference>
<dbReference type="GO" id="GO:0005737">
    <property type="term" value="C:cytoplasm"/>
    <property type="evidence" value="ECO:0007669"/>
    <property type="project" value="UniProtKB-SubCell"/>
</dbReference>
<dbReference type="GO" id="GO:0000287">
    <property type="term" value="F:magnesium ion binding"/>
    <property type="evidence" value="ECO:0007669"/>
    <property type="project" value="InterPro"/>
</dbReference>
<dbReference type="GO" id="GO:0010333">
    <property type="term" value="F:terpene synthase activity"/>
    <property type="evidence" value="ECO:0007669"/>
    <property type="project" value="InterPro"/>
</dbReference>
<dbReference type="GO" id="GO:0016102">
    <property type="term" value="P:diterpenoid biosynthetic process"/>
    <property type="evidence" value="ECO:0007669"/>
    <property type="project" value="InterPro"/>
</dbReference>
<dbReference type="CDD" id="cd00684">
    <property type="entry name" value="Terpene_cyclase_plant_C1"/>
    <property type="match status" value="1"/>
</dbReference>
<dbReference type="Gene3D" id="1.10.600.10">
    <property type="entry name" value="Farnesyl Diphosphate Synthase"/>
    <property type="match status" value="1"/>
</dbReference>
<dbReference type="Gene3D" id="1.50.10.130">
    <property type="entry name" value="Terpene synthase, N-terminal domain"/>
    <property type="match status" value="1"/>
</dbReference>
<dbReference type="InterPro" id="IPR008949">
    <property type="entry name" value="Isoprenoid_synthase_dom_sf"/>
</dbReference>
<dbReference type="InterPro" id="IPR044814">
    <property type="entry name" value="Terpene_cyclase_plant_C1"/>
</dbReference>
<dbReference type="InterPro" id="IPR001906">
    <property type="entry name" value="Terpene_synth_N"/>
</dbReference>
<dbReference type="InterPro" id="IPR036965">
    <property type="entry name" value="Terpene_synth_N_sf"/>
</dbReference>
<dbReference type="InterPro" id="IPR050148">
    <property type="entry name" value="Terpene_synthase-like"/>
</dbReference>
<dbReference type="InterPro" id="IPR005630">
    <property type="entry name" value="Terpene_synthase_metal-bd"/>
</dbReference>
<dbReference type="InterPro" id="IPR008930">
    <property type="entry name" value="Terpenoid_cyclase/PrenylTrfase"/>
</dbReference>
<dbReference type="PANTHER" id="PTHR31225:SF168">
    <property type="entry name" value="INACTIVE SESQUITHUJENE SYNTHASE"/>
    <property type="match status" value="1"/>
</dbReference>
<dbReference type="PANTHER" id="PTHR31225">
    <property type="entry name" value="OS04G0344100 PROTEIN-RELATED"/>
    <property type="match status" value="1"/>
</dbReference>
<dbReference type="Pfam" id="PF01397">
    <property type="entry name" value="Terpene_synth"/>
    <property type="match status" value="1"/>
</dbReference>
<dbReference type="Pfam" id="PF03936">
    <property type="entry name" value="Terpene_synth_C"/>
    <property type="match status" value="1"/>
</dbReference>
<dbReference type="SUPFAM" id="SSF48239">
    <property type="entry name" value="Terpenoid cyclases/Protein prenyltransferases"/>
    <property type="match status" value="1"/>
</dbReference>
<dbReference type="SUPFAM" id="SSF48576">
    <property type="entry name" value="Terpenoid synthases"/>
    <property type="match status" value="1"/>
</dbReference>
<gene>
    <name evidence="6" type="primary">TPS4</name>
</gene>
<keyword id="KW-0963">Cytoplasm</keyword>
<keyword id="KW-0460">Magnesium</keyword>
<keyword id="KW-0464">Manganese</keyword>
<keyword id="KW-0479">Metal-binding</keyword>
<keyword id="KW-1185">Reference proteome</keyword>
<organism>
    <name type="scientific">Zea mays</name>
    <name type="common">Maize</name>
    <dbReference type="NCBI Taxonomy" id="4577"/>
    <lineage>
        <taxon>Eukaryota</taxon>
        <taxon>Viridiplantae</taxon>
        <taxon>Streptophyta</taxon>
        <taxon>Embryophyta</taxon>
        <taxon>Tracheophyta</taxon>
        <taxon>Spermatophyta</taxon>
        <taxon>Magnoliopsida</taxon>
        <taxon>Liliopsida</taxon>
        <taxon>Poales</taxon>
        <taxon>Poaceae</taxon>
        <taxon>PACMAD clade</taxon>
        <taxon>Panicoideae</taxon>
        <taxon>Andropogonodae</taxon>
        <taxon>Andropogoneae</taxon>
        <taxon>Tripsacinae</taxon>
        <taxon>Zea</taxon>
    </lineage>
</organism>
<proteinExistence type="evidence at transcript level"/>
<name>TPS4B_MAIZE</name>
<comment type="function">
    <text>Non-functional sesquiterpene synthase due to a frameshift removing part of the catalytic site.</text>
</comment>
<comment type="cofactor">
    <cofactor evidence="4">
        <name>Mg(2+)</name>
        <dbReference type="ChEBI" id="CHEBI:18420"/>
    </cofactor>
    <cofactor evidence="4">
        <name>Mn(2+)</name>
        <dbReference type="ChEBI" id="CHEBI:29035"/>
    </cofactor>
    <text evidence="3">Binds 3 Mg(2+) or Mn(2+) ions per subunit.</text>
</comment>
<comment type="pathway">
    <text evidence="9">Secondary metabolite biosynthesis; terpenoid biosynthesis.</text>
</comment>
<comment type="subunit">
    <text evidence="4">Monomer.</text>
</comment>
<comment type="subcellular location">
    <subcellularLocation>
        <location evidence="5">Cytoplasm</location>
    </subcellularLocation>
</comment>
<comment type="domain">
    <text evidence="1">The Asp-Asp-Xaa-Xaa-Asp/Glu (DDXXD/E) motif is important for the catalytic activity, presumably through binding to Mg(2+).</text>
</comment>
<comment type="miscellaneous">
    <text evidence="8">The allele found in cv. B73 encodes an active enzyme while the allele found in cv. Delprim contains a frame shift mutation (PubMed:15075399).</text>
</comment>
<comment type="similarity">
    <text evidence="7">Belongs to the terpene synthase family.</text>
</comment>
<sequence>MASPPAHRSSKAADEELPKASSTFHPSLWGSFFLTYQPPTAPQRANMEERAEVLRERVRKVLKGSTTDQLPETVNLILTLQRLGLGYYYENEIDKLLHQIYSNSDYNEKDLNLVSQRFYLLRKNGYDVPSDVFLSFKTEEGGFACAAADTRSLLSLYNAAHLRKHGEEVLDEAISSTRLRLQDLLGRLLPESPFAKEVSSSLRTPLFRRVGILEARNYIPIYEKEATRNEAVLELAKLNFNLQQLDFCEELKHCSAWWNEMIAKSKLTFVRDRIVEEYFWMNGACYDPPYSLSRIILTKITGLITIIDDMFDTHGTTEDCMKFAEAFGRWDESAIHLLPEYMKDFYILMLETFQSFEDALGPEKSYRVLYLKQAMERLVELYSKEIKWRDDDYVPTMSEHLQVSAETIATIALTCSAYAGMGDMSITKETFEWALSFPQFNYKNFWFICTALQRCRIDQA</sequence>
<protein>
    <recommendedName>
        <fullName evidence="6">Inactive 7-epi-sesquithujene synthase</fullName>
    </recommendedName>
    <alternativeName>
        <fullName evidence="6">Terpene synthase 4</fullName>
        <shortName evidence="6">tps4-Del1</shortName>
    </alternativeName>
</protein>
<reference key="1">
    <citation type="journal article" date="2004" name="Plant Cell">
        <title>The variability of sesquiterpenes emitted from two Zea mays cultivars is controlled by allelic variation of two terpene synthase genes encoding stereoselective multiple product enzymes.</title>
        <authorList>
            <person name="Koellner T.G."/>
            <person name="Schnee C."/>
            <person name="Gershenzon J."/>
            <person name="Degenhardt J."/>
        </authorList>
    </citation>
    <scope>NUCLEOTIDE SEQUENCE [MRNA]</scope>
    <source>
        <strain>cv. Delprim</strain>
    </source>
</reference>
<reference key="2">
    <citation type="journal article" date="2019" name="Planta">
        <title>Biosynthesis and function of terpenoid defense compounds in maize (Zea mays).</title>
        <authorList>
            <person name="Block A.K."/>
            <person name="Vaughan M.M."/>
            <person name="Schmelz E.A."/>
            <person name="Christensen S.A."/>
        </authorList>
    </citation>
    <scope>REVIEW</scope>
</reference>